<dbReference type="EC" id="7.1.1.2"/>
<dbReference type="EMBL" id="L04272">
    <property type="protein sequence ID" value="AAA93546.1"/>
    <property type="molecule type" value="Genomic_DNA"/>
</dbReference>
<dbReference type="SMR" id="P33509"/>
<dbReference type="GO" id="GO:0031966">
    <property type="term" value="C:mitochondrial membrane"/>
    <property type="evidence" value="ECO:0007669"/>
    <property type="project" value="UniProtKB-SubCell"/>
</dbReference>
<dbReference type="GO" id="GO:0030964">
    <property type="term" value="C:NADH dehydrogenase complex"/>
    <property type="evidence" value="ECO:0007669"/>
    <property type="project" value="TreeGrafter"/>
</dbReference>
<dbReference type="GO" id="GO:0008137">
    <property type="term" value="F:NADH dehydrogenase (ubiquinone) activity"/>
    <property type="evidence" value="ECO:0007669"/>
    <property type="project" value="UniProtKB-EC"/>
</dbReference>
<dbReference type="FunFam" id="1.20.58.1610:FF:000004">
    <property type="entry name" value="NADH-quinone oxidoreductase subunit A"/>
    <property type="match status" value="1"/>
</dbReference>
<dbReference type="Gene3D" id="1.20.58.1610">
    <property type="entry name" value="NADH:ubiquinone/plastoquinone oxidoreductase, chain 3"/>
    <property type="match status" value="1"/>
</dbReference>
<dbReference type="InterPro" id="IPR000440">
    <property type="entry name" value="NADH_UbQ/plastoQ_OxRdtase_su3"/>
</dbReference>
<dbReference type="InterPro" id="IPR038430">
    <property type="entry name" value="NDAH_ubi_oxred_su3_sf"/>
</dbReference>
<dbReference type="PANTHER" id="PTHR11058">
    <property type="entry name" value="NADH-UBIQUINONE OXIDOREDUCTASE CHAIN 3"/>
    <property type="match status" value="1"/>
</dbReference>
<dbReference type="PANTHER" id="PTHR11058:SF9">
    <property type="entry name" value="NADH-UBIQUINONE OXIDOREDUCTASE CHAIN 3"/>
    <property type="match status" value="1"/>
</dbReference>
<dbReference type="Pfam" id="PF00507">
    <property type="entry name" value="Oxidored_q4"/>
    <property type="match status" value="1"/>
</dbReference>
<gene>
    <name type="primary">ND3</name>
</gene>
<protein>
    <recommendedName>
        <fullName>NADH-ubiquinone oxidoreductase chain 3</fullName>
        <ecNumber>7.1.1.2</ecNumber>
    </recommendedName>
    <alternativeName>
        <fullName>NADH dehydrogenase subunit 3</fullName>
    </alternativeName>
</protein>
<sequence length="117" mass="13607">MLMLSIMATIIFIITIVVMMLATLLSKKTLLDREKCSPFECGFDPMNSSRLPFALRFFLIAIIFLIFDVEIALLLPMVMIIKTSNLMNWTMTSFFFIFILLIGLYHEWNQGALEWNN</sequence>
<keyword id="KW-0249">Electron transport</keyword>
<keyword id="KW-0472">Membrane</keyword>
<keyword id="KW-0496">Mitochondrion</keyword>
<keyword id="KW-0520">NAD</keyword>
<keyword id="KW-0679">Respiratory chain</keyword>
<keyword id="KW-1278">Translocase</keyword>
<keyword id="KW-0812">Transmembrane</keyword>
<keyword id="KW-1133">Transmembrane helix</keyword>
<keyword id="KW-0813">Transport</keyword>
<keyword id="KW-0830">Ubiquinone</keyword>
<reference key="1">
    <citation type="journal article" date="1990" name="Arch. Insect Biochem. Physiol.">
        <title>Cloning of the mitochondrial genome of Anopheles quadrimaculatus.</title>
        <authorList>
            <person name="Cockburn A.F."/>
            <person name="Mitchell S.E."/>
            <person name="Seawright J.A."/>
        </authorList>
    </citation>
    <scope>NUCLEOTIDE SEQUENCE [GENOMIC DNA]</scope>
    <source>
        <strain>Orlando</strain>
    </source>
</reference>
<comment type="function">
    <text evidence="1">Core subunit of the mitochondrial membrane respiratory chain NADH dehydrogenase (Complex I) that is believed to belong to the minimal assembly required for catalysis. Complex I functions in the transfer of electrons from NADH to the respiratory chain. The immediate electron acceptor for the enzyme is believed to be ubiquinone (By similarity).</text>
</comment>
<comment type="catalytic activity">
    <reaction>
        <text>a ubiquinone + NADH + 5 H(+)(in) = a ubiquinol + NAD(+) + 4 H(+)(out)</text>
        <dbReference type="Rhea" id="RHEA:29091"/>
        <dbReference type="Rhea" id="RHEA-COMP:9565"/>
        <dbReference type="Rhea" id="RHEA-COMP:9566"/>
        <dbReference type="ChEBI" id="CHEBI:15378"/>
        <dbReference type="ChEBI" id="CHEBI:16389"/>
        <dbReference type="ChEBI" id="CHEBI:17976"/>
        <dbReference type="ChEBI" id="CHEBI:57540"/>
        <dbReference type="ChEBI" id="CHEBI:57945"/>
        <dbReference type="EC" id="7.1.1.2"/>
    </reaction>
</comment>
<comment type="subcellular location">
    <subcellularLocation>
        <location evidence="1">Mitochondrion membrane</location>
        <topology evidence="1">Multi-pass membrane protein</topology>
    </subcellularLocation>
</comment>
<comment type="similarity">
    <text evidence="3">Belongs to the complex I subunit 3 family.</text>
</comment>
<organism>
    <name type="scientific">Anopheles quadrimaculatus</name>
    <name type="common">Common malaria mosquito</name>
    <dbReference type="NCBI Taxonomy" id="7166"/>
    <lineage>
        <taxon>Eukaryota</taxon>
        <taxon>Metazoa</taxon>
        <taxon>Ecdysozoa</taxon>
        <taxon>Arthropoda</taxon>
        <taxon>Hexapoda</taxon>
        <taxon>Insecta</taxon>
        <taxon>Pterygota</taxon>
        <taxon>Neoptera</taxon>
        <taxon>Endopterygota</taxon>
        <taxon>Diptera</taxon>
        <taxon>Nematocera</taxon>
        <taxon>Culicoidea</taxon>
        <taxon>Culicidae</taxon>
        <taxon>Anophelinae</taxon>
        <taxon>Anopheles</taxon>
    </lineage>
</organism>
<geneLocation type="mitochondrion"/>
<accession>P33509</accession>
<name>NU3M_ANOQU</name>
<evidence type="ECO:0000250" key="1"/>
<evidence type="ECO:0000255" key="2"/>
<evidence type="ECO:0000305" key="3"/>
<feature type="chain" id="PRO_0000117705" description="NADH-ubiquinone oxidoreductase chain 3">
    <location>
        <begin position="1"/>
        <end position="117"/>
    </location>
</feature>
<feature type="transmembrane region" description="Helical" evidence="2">
    <location>
        <begin position="1"/>
        <end position="21"/>
    </location>
</feature>
<feature type="transmembrane region" description="Helical" evidence="2">
    <location>
        <begin position="57"/>
        <end position="77"/>
    </location>
</feature>
<feature type="transmembrane region" description="Helical" evidence="2">
    <location>
        <begin position="86"/>
        <end position="106"/>
    </location>
</feature>
<proteinExistence type="inferred from homology"/>